<proteinExistence type="inferred from homology"/>
<reference key="1">
    <citation type="journal article" date="2003" name="Int. J. Syst. Evol. Microbiol.">
        <title>RNA polymerase beta-subunit-based phylogeny of Ehrlichia spp., Anaplasma spp., Neorickettsia spp. and Wolbachia pipientis.</title>
        <authorList>
            <person name="Taillardat-Bisch A.V."/>
            <person name="Raoult D."/>
            <person name="Drancourt M."/>
        </authorList>
    </citation>
    <scope>NUCLEOTIDE SEQUENCE [GENOMIC DNA]</scope>
    <source>
        <strain>O'Neill</strain>
    </source>
</reference>
<accession>Q93MK7</accession>
<name>RPOB_WOLPI</name>
<organism>
    <name type="scientific">Wolbachia pipientis</name>
    <dbReference type="NCBI Taxonomy" id="955"/>
    <lineage>
        <taxon>Bacteria</taxon>
        <taxon>Pseudomonadati</taxon>
        <taxon>Pseudomonadota</taxon>
        <taxon>Alphaproteobacteria</taxon>
        <taxon>Rickettsiales</taxon>
        <taxon>Anaplasmataceae</taxon>
        <taxon>Wolbachieae</taxon>
        <taxon>Wolbachia</taxon>
    </lineage>
</organism>
<comment type="function">
    <text evidence="1">DNA-dependent RNA polymerase catalyzes the transcription of DNA into RNA using the four ribonucleoside triphosphates as substrates.</text>
</comment>
<comment type="catalytic activity">
    <reaction evidence="1">
        <text>RNA(n) + a ribonucleoside 5'-triphosphate = RNA(n+1) + diphosphate</text>
        <dbReference type="Rhea" id="RHEA:21248"/>
        <dbReference type="Rhea" id="RHEA-COMP:14527"/>
        <dbReference type="Rhea" id="RHEA-COMP:17342"/>
        <dbReference type="ChEBI" id="CHEBI:33019"/>
        <dbReference type="ChEBI" id="CHEBI:61557"/>
        <dbReference type="ChEBI" id="CHEBI:140395"/>
        <dbReference type="EC" id="2.7.7.6"/>
    </reaction>
</comment>
<comment type="subunit">
    <text evidence="1">The RNAP catalytic core consists of 2 alpha, 1 beta, 1 beta' and 1 omega subunit. When a sigma factor is associated with the core the holoenzyme is formed, which can initiate transcription.</text>
</comment>
<comment type="similarity">
    <text evidence="1">Belongs to the RNA polymerase beta chain family.</text>
</comment>
<sequence length="1436" mass="161619">MSSAGDSGPGYVLNDFDAVPRGTRGRRPGLVKDSLLDLVKVQKGSYNSFTPNNESNERLEAIFHTIFPISDPLHRATIEFLNCRVDDLKYSESECIKRGITFSAQVIASIRLVIMQDGVSLEKYQEIKEYDDHSKLATVIKSAEEQEVRFCELPMMTDKGTFIINGVEKVIVSQMHRSPGVFFDSDKGKTYNSGKLIYSARVIPYRGSWLDIEFDVKDHLYFRIDRKRKLPISVLLKALGLSNNDILNKFMKNRVYKHKSGWKVPFFPDKFKGVRLPFDLKNVEGNVLLKANVRITSKLAKNLYDNGLKEYLIPYDSICGLFLAEDLIDSASSTKILSAGESIKLEDIKKLELLSIDKISVLNIDNVSVGPYILNTLFLDENMSYENALYEIYKVLRPGEVPVLKIVEEFFRNLFFSPEYYDLSNIGRLKLNSCLGLNYEENLTTLTHEDIIEIIRKIVLLRDGQGSVDDDIDHLANRRVRSVGEFIENQFRTGLLKLGRAVVDSMSTSSLDKVSPSDFINPKVLTNVLRDFFNSSQLSQFMDQTNPLSEITHKRRLSALGPGGLTRERAGFEVRDVHPTHYGRICPIETPEQNIAYNSLAIYARINKYGFIESPYRKVVNKVVTDQIEYLSAIDEGLYYIADTSAKLDENNCFVDDMLYCRYAGTFVMVNSNQVSYIDLSPKQVISVAASLIPFLENDDANRALMGSNMQRQAVPLLKPTAPLVATGMESFVASGSGAVVLAKRGGIVDSSDSNSIVIRAFDKGGINYLDVDIYHLRKFQRSNHNTCINQKPLVHVGDCVKEGDVIADGPAINNGELALGQNLLVAFMSWQGYNFEDSIIISSEVVKKDLFTSIHIEEFECVVHDTPLGSEKITRAIPGVNEENLYHLDDSGIVKVGTRVGPGYILVGKVTPRHSLSLPPETKLLMTIFGEKSFDCVDSSLYTSPDIEGIVIDVQVFTRRGEEENERAFLIKQKEANDFEKERDHIINVINQYFYDELRKILINSGSQDRESINFIEREGWWDIGLKNQSISKQVESLKKDFDEKVSHAITNFKRKVEKLHEGYDLPQGVSMSVKVFIAVKHSLQPGDKMAGRHGNKGVISRVVPVEDMPYLEDGTPIDIILNPLGVPSRMNVGQMLETHVGWACKKLGEKVGNILDEINKIKRAFCEAIRSLSDDDFEKFAALYLDNKKFEDINDDEITASILDTPNKDELNNELTTLVENYFNSCKDAHSSLRHFLIEVYSCGSNLSICNNIRDINDNHLIEFAYKLRDGIPVTAPVFEGPKDEQIVKLFELAGLDNSGQVVLYDGCSGEKFDRKVTVGYMYMLKLHHLVDGKIHARSVGPYSLVTQQPLGGKSHFGGQRFGEMECWALQAYGAAYTLQEMLTVKSDDINGRVKIYESVIKGDSNFECGIPESFNVMIKELRSLCFNVDLNAK</sequence>
<dbReference type="EC" id="2.7.7.6" evidence="1"/>
<dbReference type="EMBL" id="AF401090">
    <property type="protein sequence ID" value="AAK83926.1"/>
    <property type="molecule type" value="Genomic_DNA"/>
</dbReference>
<dbReference type="SMR" id="Q93MK7"/>
<dbReference type="GO" id="GO:0000428">
    <property type="term" value="C:DNA-directed RNA polymerase complex"/>
    <property type="evidence" value="ECO:0007669"/>
    <property type="project" value="UniProtKB-KW"/>
</dbReference>
<dbReference type="GO" id="GO:0003677">
    <property type="term" value="F:DNA binding"/>
    <property type="evidence" value="ECO:0007669"/>
    <property type="project" value="UniProtKB-UniRule"/>
</dbReference>
<dbReference type="GO" id="GO:0003899">
    <property type="term" value="F:DNA-directed RNA polymerase activity"/>
    <property type="evidence" value="ECO:0007669"/>
    <property type="project" value="UniProtKB-UniRule"/>
</dbReference>
<dbReference type="GO" id="GO:0032549">
    <property type="term" value="F:ribonucleoside binding"/>
    <property type="evidence" value="ECO:0007669"/>
    <property type="project" value="InterPro"/>
</dbReference>
<dbReference type="GO" id="GO:0006351">
    <property type="term" value="P:DNA-templated transcription"/>
    <property type="evidence" value="ECO:0007669"/>
    <property type="project" value="UniProtKB-UniRule"/>
</dbReference>
<dbReference type="CDD" id="cd00653">
    <property type="entry name" value="RNA_pol_B_RPB2"/>
    <property type="match status" value="1"/>
</dbReference>
<dbReference type="FunFam" id="3.90.1800.10:FF:000001">
    <property type="entry name" value="DNA-directed RNA polymerase subunit beta"/>
    <property type="match status" value="1"/>
</dbReference>
<dbReference type="Gene3D" id="2.40.50.100">
    <property type="match status" value="1"/>
</dbReference>
<dbReference type="Gene3D" id="2.40.50.150">
    <property type="match status" value="1"/>
</dbReference>
<dbReference type="Gene3D" id="3.90.1100.10">
    <property type="match status" value="2"/>
</dbReference>
<dbReference type="Gene3D" id="2.30.150.10">
    <property type="entry name" value="DNA-directed RNA polymerase, beta subunit, external 1 domain"/>
    <property type="match status" value="1"/>
</dbReference>
<dbReference type="Gene3D" id="2.40.270.10">
    <property type="entry name" value="DNA-directed RNA polymerase, subunit 2, domain 6"/>
    <property type="match status" value="1"/>
</dbReference>
<dbReference type="Gene3D" id="3.90.1800.10">
    <property type="entry name" value="RNA polymerase alpha subunit dimerisation domain"/>
    <property type="match status" value="1"/>
</dbReference>
<dbReference type="Gene3D" id="3.90.1110.10">
    <property type="entry name" value="RNA polymerase Rpb2, domain 2"/>
    <property type="match status" value="1"/>
</dbReference>
<dbReference type="HAMAP" id="MF_01321">
    <property type="entry name" value="RNApol_bact_RpoB"/>
    <property type="match status" value="1"/>
</dbReference>
<dbReference type="InterPro" id="IPR042107">
    <property type="entry name" value="DNA-dir_RNA_pol_bsu_ext_1_sf"/>
</dbReference>
<dbReference type="InterPro" id="IPR019462">
    <property type="entry name" value="DNA-dir_RNA_pol_bsu_external_1"/>
</dbReference>
<dbReference type="InterPro" id="IPR015712">
    <property type="entry name" value="DNA-dir_RNA_pol_su2"/>
</dbReference>
<dbReference type="InterPro" id="IPR007120">
    <property type="entry name" value="DNA-dir_RNAP_su2_dom"/>
</dbReference>
<dbReference type="InterPro" id="IPR037033">
    <property type="entry name" value="DNA-dir_RNAP_su2_hyb_sf"/>
</dbReference>
<dbReference type="InterPro" id="IPR010243">
    <property type="entry name" value="RNA_pol_bsu_bac"/>
</dbReference>
<dbReference type="InterPro" id="IPR007121">
    <property type="entry name" value="RNA_pol_bsu_CS"/>
</dbReference>
<dbReference type="InterPro" id="IPR007644">
    <property type="entry name" value="RNA_pol_bsu_protrusion"/>
</dbReference>
<dbReference type="InterPro" id="IPR007642">
    <property type="entry name" value="RNA_pol_Rpb2_2"/>
</dbReference>
<dbReference type="InterPro" id="IPR037034">
    <property type="entry name" value="RNA_pol_Rpb2_2_sf"/>
</dbReference>
<dbReference type="InterPro" id="IPR007645">
    <property type="entry name" value="RNA_pol_Rpb2_3"/>
</dbReference>
<dbReference type="InterPro" id="IPR007641">
    <property type="entry name" value="RNA_pol_Rpb2_7"/>
</dbReference>
<dbReference type="InterPro" id="IPR014724">
    <property type="entry name" value="RNA_pol_RPB2_OB-fold"/>
</dbReference>
<dbReference type="NCBIfam" id="NF001616">
    <property type="entry name" value="PRK00405.1"/>
    <property type="match status" value="1"/>
</dbReference>
<dbReference type="NCBIfam" id="TIGR02013">
    <property type="entry name" value="rpoB"/>
    <property type="match status" value="1"/>
</dbReference>
<dbReference type="PANTHER" id="PTHR20856">
    <property type="entry name" value="DNA-DIRECTED RNA POLYMERASE I SUBUNIT 2"/>
    <property type="match status" value="1"/>
</dbReference>
<dbReference type="Pfam" id="PF04563">
    <property type="entry name" value="RNA_pol_Rpb2_1"/>
    <property type="match status" value="1"/>
</dbReference>
<dbReference type="Pfam" id="PF04561">
    <property type="entry name" value="RNA_pol_Rpb2_2"/>
    <property type="match status" value="2"/>
</dbReference>
<dbReference type="Pfam" id="PF04565">
    <property type="entry name" value="RNA_pol_Rpb2_3"/>
    <property type="match status" value="1"/>
</dbReference>
<dbReference type="Pfam" id="PF10385">
    <property type="entry name" value="RNA_pol_Rpb2_45"/>
    <property type="match status" value="1"/>
</dbReference>
<dbReference type="Pfam" id="PF00562">
    <property type="entry name" value="RNA_pol_Rpb2_6"/>
    <property type="match status" value="1"/>
</dbReference>
<dbReference type="Pfam" id="PF04560">
    <property type="entry name" value="RNA_pol_Rpb2_7"/>
    <property type="match status" value="1"/>
</dbReference>
<dbReference type="SUPFAM" id="SSF64484">
    <property type="entry name" value="beta and beta-prime subunits of DNA dependent RNA-polymerase"/>
    <property type="match status" value="1"/>
</dbReference>
<dbReference type="PROSITE" id="PS01166">
    <property type="entry name" value="RNA_POL_BETA"/>
    <property type="match status" value="1"/>
</dbReference>
<feature type="chain" id="PRO_0000047997" description="DNA-directed RNA polymerase subunit beta">
    <location>
        <begin position="1"/>
        <end position="1436"/>
    </location>
</feature>
<protein>
    <recommendedName>
        <fullName evidence="1">DNA-directed RNA polymerase subunit beta</fullName>
        <shortName evidence="1">RNAP subunit beta</shortName>
        <ecNumber evidence="1">2.7.7.6</ecNumber>
    </recommendedName>
    <alternativeName>
        <fullName evidence="1">RNA polymerase subunit beta</fullName>
    </alternativeName>
    <alternativeName>
        <fullName evidence="1">Transcriptase subunit beta</fullName>
    </alternativeName>
</protein>
<gene>
    <name evidence="1" type="primary">rpoB</name>
</gene>
<keyword id="KW-0240">DNA-directed RNA polymerase</keyword>
<keyword id="KW-0548">Nucleotidyltransferase</keyword>
<keyword id="KW-0804">Transcription</keyword>
<keyword id="KW-0808">Transferase</keyword>
<evidence type="ECO:0000255" key="1">
    <source>
        <dbReference type="HAMAP-Rule" id="MF_01321"/>
    </source>
</evidence>